<comment type="function">
    <text evidence="1">This protein promotes the GTP-dependent binding of aminoacyl-tRNA to the A-site of ribosomes during protein biosynthesis.</text>
</comment>
<comment type="subcellular location">
    <subcellularLocation>
        <location evidence="1">Cytoplasm</location>
    </subcellularLocation>
</comment>
<comment type="similarity">
    <text evidence="2">Belongs to the TRAFAC class translation factor GTPase superfamily. Classic translation factor GTPase family. EF-Tu/EF-1A subfamily.</text>
</comment>
<evidence type="ECO:0000250" key="1"/>
<evidence type="ECO:0000305" key="2"/>
<name>EF1A1_OSCTI</name>
<organism>
    <name type="scientific">Oscheius tipulae</name>
    <dbReference type="NCBI Taxonomy" id="141969"/>
    <lineage>
        <taxon>Eukaryota</taxon>
        <taxon>Metazoa</taxon>
        <taxon>Ecdysozoa</taxon>
        <taxon>Nematoda</taxon>
        <taxon>Chromadorea</taxon>
        <taxon>Rhabditida</taxon>
        <taxon>Rhabditina</taxon>
        <taxon>Rhabditomorpha</taxon>
        <taxon>Rhabditoidea</taxon>
        <taxon>Rhabditidae</taxon>
        <taxon>Rhabditinae</taxon>
        <taxon>Oscheius</taxon>
    </lineage>
</organism>
<keyword id="KW-0963">Cytoplasm</keyword>
<keyword id="KW-0251">Elongation factor</keyword>
<keyword id="KW-0342">GTP-binding</keyword>
<keyword id="KW-0547">Nucleotide-binding</keyword>
<keyword id="KW-0597">Phosphoprotein</keyword>
<keyword id="KW-0648">Protein biosynthesis</keyword>
<reference key="1">
    <citation type="submission" date="2005-02" db="EMBL/GenBank/DDBJ databases">
        <title>Four eEF1A genes from a Rhabditid nematode.</title>
        <authorList>
            <person name="Akamine R.N."/>
            <person name="Winter C.E."/>
        </authorList>
    </citation>
    <scope>NUCLEOTIDE SEQUENCE [GENOMIC DNA]</scope>
    <source>
        <strain>CEW1</strain>
    </source>
</reference>
<accession>Q2HJN4</accession>
<feature type="chain" id="PRO_0000303014" description="Elongation factor 1-alpha 1">
    <location>
        <begin position="1"/>
        <end position="459"/>
    </location>
</feature>
<feature type="domain" description="tr-type G">
    <location>
        <begin position="5"/>
        <end position="242"/>
    </location>
</feature>
<feature type="region of interest" description="G1" evidence="1">
    <location>
        <begin position="14"/>
        <end position="21"/>
    </location>
</feature>
<feature type="region of interest" description="G2" evidence="1">
    <location>
        <begin position="70"/>
        <end position="74"/>
    </location>
</feature>
<feature type="region of interest" description="G3" evidence="1">
    <location>
        <begin position="91"/>
        <end position="94"/>
    </location>
</feature>
<feature type="region of interest" description="G4" evidence="1">
    <location>
        <begin position="153"/>
        <end position="156"/>
    </location>
</feature>
<feature type="region of interest" description="G5" evidence="1">
    <location>
        <begin position="194"/>
        <end position="196"/>
    </location>
</feature>
<feature type="modified residue" description="5-glutamyl glycerylphosphorylethanolamine" evidence="1">
    <location>
        <position position="301"/>
    </location>
</feature>
<feature type="modified residue" description="5-glutamyl glycerylphosphorylethanolamine" evidence="1">
    <location>
        <position position="374"/>
    </location>
</feature>
<gene>
    <name type="primary">eft-1</name>
</gene>
<protein>
    <recommendedName>
        <fullName>Elongation factor 1-alpha 1</fullName>
        <shortName>EF-1-alpha-1</shortName>
    </recommendedName>
</protein>
<dbReference type="EMBL" id="AY928342">
    <property type="protein sequence ID" value="AAY17226.1"/>
    <property type="molecule type" value="Genomic_DNA"/>
</dbReference>
<dbReference type="SMR" id="Q2HJN4"/>
<dbReference type="GO" id="GO:0005737">
    <property type="term" value="C:cytoplasm"/>
    <property type="evidence" value="ECO:0007669"/>
    <property type="project" value="UniProtKB-SubCell"/>
</dbReference>
<dbReference type="GO" id="GO:0005525">
    <property type="term" value="F:GTP binding"/>
    <property type="evidence" value="ECO:0007669"/>
    <property type="project" value="UniProtKB-KW"/>
</dbReference>
<dbReference type="GO" id="GO:0003924">
    <property type="term" value="F:GTPase activity"/>
    <property type="evidence" value="ECO:0007669"/>
    <property type="project" value="InterPro"/>
</dbReference>
<dbReference type="GO" id="GO:0003746">
    <property type="term" value="F:translation elongation factor activity"/>
    <property type="evidence" value="ECO:0007669"/>
    <property type="project" value="UniProtKB-KW"/>
</dbReference>
<dbReference type="CDD" id="cd01883">
    <property type="entry name" value="EF1_alpha"/>
    <property type="match status" value="1"/>
</dbReference>
<dbReference type="CDD" id="cd03693">
    <property type="entry name" value="EF1_alpha_II"/>
    <property type="match status" value="1"/>
</dbReference>
<dbReference type="CDD" id="cd03705">
    <property type="entry name" value="EF1_alpha_III"/>
    <property type="match status" value="1"/>
</dbReference>
<dbReference type="FunFam" id="2.40.30.10:FF:000003">
    <property type="entry name" value="Elongation factor 1-alpha"/>
    <property type="match status" value="1"/>
</dbReference>
<dbReference type="FunFam" id="2.40.30.10:FF:000005">
    <property type="entry name" value="Elongation factor 1-alpha"/>
    <property type="match status" value="1"/>
</dbReference>
<dbReference type="FunFam" id="3.40.50.300:FF:000090">
    <property type="entry name" value="Elongation factor 1-alpha"/>
    <property type="match status" value="1"/>
</dbReference>
<dbReference type="Gene3D" id="3.40.50.300">
    <property type="entry name" value="P-loop containing nucleotide triphosphate hydrolases"/>
    <property type="match status" value="1"/>
</dbReference>
<dbReference type="Gene3D" id="2.40.30.10">
    <property type="entry name" value="Translation factors"/>
    <property type="match status" value="2"/>
</dbReference>
<dbReference type="HAMAP" id="MF_00118_A">
    <property type="entry name" value="EF_Tu_A"/>
    <property type="match status" value="1"/>
</dbReference>
<dbReference type="InterPro" id="IPR004161">
    <property type="entry name" value="EFTu-like_2"/>
</dbReference>
<dbReference type="InterPro" id="IPR031157">
    <property type="entry name" value="G_TR_CS"/>
</dbReference>
<dbReference type="InterPro" id="IPR054696">
    <property type="entry name" value="GTP-eEF1A_C"/>
</dbReference>
<dbReference type="InterPro" id="IPR027417">
    <property type="entry name" value="P-loop_NTPase"/>
</dbReference>
<dbReference type="InterPro" id="IPR000795">
    <property type="entry name" value="T_Tr_GTP-bd_dom"/>
</dbReference>
<dbReference type="InterPro" id="IPR050100">
    <property type="entry name" value="TRAFAC_GTPase_members"/>
</dbReference>
<dbReference type="InterPro" id="IPR009000">
    <property type="entry name" value="Transl_B-barrel_sf"/>
</dbReference>
<dbReference type="InterPro" id="IPR009001">
    <property type="entry name" value="Transl_elong_EF1A/Init_IF2_C"/>
</dbReference>
<dbReference type="InterPro" id="IPR004539">
    <property type="entry name" value="Transl_elong_EF1A_euk/arc"/>
</dbReference>
<dbReference type="NCBIfam" id="TIGR00483">
    <property type="entry name" value="EF-1_alpha"/>
    <property type="match status" value="1"/>
</dbReference>
<dbReference type="NCBIfam" id="NF008969">
    <property type="entry name" value="PRK12317.1"/>
    <property type="match status" value="1"/>
</dbReference>
<dbReference type="PANTHER" id="PTHR23115">
    <property type="entry name" value="TRANSLATION FACTOR"/>
    <property type="match status" value="1"/>
</dbReference>
<dbReference type="Pfam" id="PF22594">
    <property type="entry name" value="GTP-eEF1A_C"/>
    <property type="match status" value="1"/>
</dbReference>
<dbReference type="Pfam" id="PF00009">
    <property type="entry name" value="GTP_EFTU"/>
    <property type="match status" value="1"/>
</dbReference>
<dbReference type="Pfam" id="PF03144">
    <property type="entry name" value="GTP_EFTU_D2"/>
    <property type="match status" value="1"/>
</dbReference>
<dbReference type="PRINTS" id="PR00315">
    <property type="entry name" value="ELONGATNFCT"/>
</dbReference>
<dbReference type="SUPFAM" id="SSF50465">
    <property type="entry name" value="EF-Tu/eEF-1alpha/eIF2-gamma C-terminal domain"/>
    <property type="match status" value="1"/>
</dbReference>
<dbReference type="SUPFAM" id="SSF52540">
    <property type="entry name" value="P-loop containing nucleoside triphosphate hydrolases"/>
    <property type="match status" value="1"/>
</dbReference>
<dbReference type="SUPFAM" id="SSF50447">
    <property type="entry name" value="Translation proteins"/>
    <property type="match status" value="1"/>
</dbReference>
<dbReference type="PROSITE" id="PS00301">
    <property type="entry name" value="G_TR_1"/>
    <property type="match status" value="1"/>
</dbReference>
<dbReference type="PROSITE" id="PS51722">
    <property type="entry name" value="G_TR_2"/>
    <property type="match status" value="1"/>
</dbReference>
<proteinExistence type="inferred from homology"/>
<sequence>MGKEKTHINIVVIGHVDSGKSTTTGHLIYKCGGIDKRTIEKFEKEAQEMGKGSFKYAWVLDKLKAERERGITIDIALWKFETAKFYVTIIDAPGHRDFIKKMITGTSQADCAVLVVACGTGEFEAGISKNGQTREHALLAQTLGVKQMIVACNKMDSTEPPFSEKRFEEIITEVKSFIKKIGYNPATIPFVPISGFNGDNMLEPSANMSWYKGWSVERKEGNASGKTLLEALDCIIPPQRPTDRPLRLPLQDVYKIGGIGTVPVGRVETGVIKPGMVVTFAPQNVTTEVKSVEMHHESLPEAQPGDNVGFNVKNVSVKDIRRGSVCSDSKNDPAKESKSFTAQVIVMNHPGQIGAGYTPVLDCHTAHIACKFAELKEKVDRRTGKKVEDLPKFLKSGDAGIVELIPTKPLCVEAFTDYAPLGRFAVRDMRQTVAVGVIKGVTKDDGSGGKVTKSAAKKK</sequence>